<comment type="function">
    <text evidence="1">Catalyzes the transfer of a phosphate group to glutamate to form L-glutamate 5-phosphate.</text>
</comment>
<comment type="catalytic activity">
    <reaction evidence="1">
        <text>L-glutamate + ATP = L-glutamyl 5-phosphate + ADP</text>
        <dbReference type="Rhea" id="RHEA:14877"/>
        <dbReference type="ChEBI" id="CHEBI:29985"/>
        <dbReference type="ChEBI" id="CHEBI:30616"/>
        <dbReference type="ChEBI" id="CHEBI:58274"/>
        <dbReference type="ChEBI" id="CHEBI:456216"/>
        <dbReference type="EC" id="2.7.2.11"/>
    </reaction>
</comment>
<comment type="pathway">
    <text evidence="1">Amino-acid biosynthesis; L-proline biosynthesis; L-glutamate 5-semialdehyde from L-glutamate: step 1/2.</text>
</comment>
<comment type="subcellular location">
    <subcellularLocation>
        <location evidence="1">Cytoplasm</location>
    </subcellularLocation>
</comment>
<comment type="similarity">
    <text evidence="1">Belongs to the glutamate 5-kinase family.</text>
</comment>
<accession>Q8CUQ5</accession>
<keyword id="KW-0028">Amino-acid biosynthesis</keyword>
<keyword id="KW-0067">ATP-binding</keyword>
<keyword id="KW-0963">Cytoplasm</keyword>
<keyword id="KW-0418">Kinase</keyword>
<keyword id="KW-0547">Nucleotide-binding</keyword>
<keyword id="KW-0641">Proline biosynthesis</keyword>
<keyword id="KW-1185">Reference proteome</keyword>
<keyword id="KW-0808">Transferase</keyword>
<evidence type="ECO:0000255" key="1">
    <source>
        <dbReference type="HAMAP-Rule" id="MF_00456"/>
    </source>
</evidence>
<name>PROB_OCEIH</name>
<protein>
    <recommendedName>
        <fullName evidence="1">Glutamate 5-kinase</fullName>
        <ecNumber evidence="1">2.7.2.11</ecNumber>
    </recommendedName>
    <alternativeName>
        <fullName evidence="1">Gamma-glutamyl kinase</fullName>
        <shortName evidence="1">GK</shortName>
    </alternativeName>
</protein>
<sequence>MNKKRVVIKIGSSSLTNEKGEIDHKKLGDHVNALAMLHQHNFEVILVSSGAVAAGFRNLGYSSRPVTLKGKQASAAIGQGLLIHTYMDKFMEYNIRSAQLLLTRSDFSVQKRYKNATSTMLELLERGVIPIINENDTVAVDELTFGDNDMLSALVSGSIHAAQLIILTDIDGIYDKHPGKYASAMRYDTIDLITNDMIQETDVSGSKLGTGGMKSKLMAAKVAASLGVPVFIGKGVGVSKLLEIVNGHGQGTYVRSFRNKQIPIRKQWISLHSTLEGKVFIDDGATQALMHNGGSLLSAGVINTQGDFEDGDVVEVYNRRNLLGRGQVSCSSEELNAANTLKKAKQMTQIPAIEVIHRDSWVMVDQIKEEFQ</sequence>
<dbReference type="EC" id="2.7.2.11" evidence="1"/>
<dbReference type="EMBL" id="BA000028">
    <property type="protein sequence ID" value="BAC13008.1"/>
    <property type="molecule type" value="Genomic_DNA"/>
</dbReference>
<dbReference type="RefSeq" id="WP_011065454.1">
    <property type="nucleotide sequence ID" value="NC_004193.1"/>
</dbReference>
<dbReference type="SMR" id="Q8CUQ5"/>
<dbReference type="STRING" id="221109.gene:10733290"/>
<dbReference type="KEGG" id="oih:OB1052"/>
<dbReference type="eggNOG" id="COG0263">
    <property type="taxonomic scope" value="Bacteria"/>
</dbReference>
<dbReference type="HOGENOM" id="CLU_025400_2_0_9"/>
<dbReference type="OrthoDB" id="9804434at2"/>
<dbReference type="PhylomeDB" id="Q8CUQ5"/>
<dbReference type="UniPathway" id="UPA00098">
    <property type="reaction ID" value="UER00359"/>
</dbReference>
<dbReference type="Proteomes" id="UP000000822">
    <property type="component" value="Chromosome"/>
</dbReference>
<dbReference type="GO" id="GO:0005829">
    <property type="term" value="C:cytosol"/>
    <property type="evidence" value="ECO:0007669"/>
    <property type="project" value="TreeGrafter"/>
</dbReference>
<dbReference type="GO" id="GO:0005524">
    <property type="term" value="F:ATP binding"/>
    <property type="evidence" value="ECO:0007669"/>
    <property type="project" value="UniProtKB-KW"/>
</dbReference>
<dbReference type="GO" id="GO:0004349">
    <property type="term" value="F:glutamate 5-kinase activity"/>
    <property type="evidence" value="ECO:0007669"/>
    <property type="project" value="UniProtKB-UniRule"/>
</dbReference>
<dbReference type="GO" id="GO:0003723">
    <property type="term" value="F:RNA binding"/>
    <property type="evidence" value="ECO:0007669"/>
    <property type="project" value="InterPro"/>
</dbReference>
<dbReference type="GO" id="GO:0055129">
    <property type="term" value="P:L-proline biosynthetic process"/>
    <property type="evidence" value="ECO:0007669"/>
    <property type="project" value="UniProtKB-UniRule"/>
</dbReference>
<dbReference type="CDD" id="cd04242">
    <property type="entry name" value="AAK_G5K_ProB"/>
    <property type="match status" value="1"/>
</dbReference>
<dbReference type="CDD" id="cd21157">
    <property type="entry name" value="PUA_G5K"/>
    <property type="match status" value="1"/>
</dbReference>
<dbReference type="FunFam" id="3.40.1160.10:FF:000018">
    <property type="entry name" value="Glutamate 5-kinase"/>
    <property type="match status" value="1"/>
</dbReference>
<dbReference type="Gene3D" id="3.40.1160.10">
    <property type="entry name" value="Acetylglutamate kinase-like"/>
    <property type="match status" value="1"/>
</dbReference>
<dbReference type="Gene3D" id="2.30.130.10">
    <property type="entry name" value="PUA domain"/>
    <property type="match status" value="1"/>
</dbReference>
<dbReference type="HAMAP" id="MF_00456">
    <property type="entry name" value="ProB"/>
    <property type="match status" value="1"/>
</dbReference>
<dbReference type="InterPro" id="IPR036393">
    <property type="entry name" value="AceGlu_kinase-like_sf"/>
</dbReference>
<dbReference type="InterPro" id="IPR001048">
    <property type="entry name" value="Asp/Glu/Uridylate_kinase"/>
</dbReference>
<dbReference type="InterPro" id="IPR041739">
    <property type="entry name" value="G5K_ProB"/>
</dbReference>
<dbReference type="InterPro" id="IPR001057">
    <property type="entry name" value="Glu/AcGlu_kinase"/>
</dbReference>
<dbReference type="InterPro" id="IPR011529">
    <property type="entry name" value="Glu_5kinase"/>
</dbReference>
<dbReference type="InterPro" id="IPR005715">
    <property type="entry name" value="Glu_5kinase/COase_Synthase"/>
</dbReference>
<dbReference type="InterPro" id="IPR019797">
    <property type="entry name" value="Glutamate_5-kinase_CS"/>
</dbReference>
<dbReference type="InterPro" id="IPR002478">
    <property type="entry name" value="PUA"/>
</dbReference>
<dbReference type="InterPro" id="IPR015947">
    <property type="entry name" value="PUA-like_sf"/>
</dbReference>
<dbReference type="InterPro" id="IPR036974">
    <property type="entry name" value="PUA_sf"/>
</dbReference>
<dbReference type="NCBIfam" id="TIGR01027">
    <property type="entry name" value="proB"/>
    <property type="match status" value="1"/>
</dbReference>
<dbReference type="PANTHER" id="PTHR43654">
    <property type="entry name" value="GLUTAMATE 5-KINASE"/>
    <property type="match status" value="1"/>
</dbReference>
<dbReference type="PANTHER" id="PTHR43654:SF1">
    <property type="entry name" value="ISOPENTENYL PHOSPHATE KINASE"/>
    <property type="match status" value="1"/>
</dbReference>
<dbReference type="Pfam" id="PF00696">
    <property type="entry name" value="AA_kinase"/>
    <property type="match status" value="1"/>
</dbReference>
<dbReference type="Pfam" id="PF01472">
    <property type="entry name" value="PUA"/>
    <property type="match status" value="1"/>
</dbReference>
<dbReference type="PIRSF" id="PIRSF000729">
    <property type="entry name" value="GK"/>
    <property type="match status" value="1"/>
</dbReference>
<dbReference type="PRINTS" id="PR00474">
    <property type="entry name" value="GLU5KINASE"/>
</dbReference>
<dbReference type="SMART" id="SM00359">
    <property type="entry name" value="PUA"/>
    <property type="match status" value="1"/>
</dbReference>
<dbReference type="SUPFAM" id="SSF53633">
    <property type="entry name" value="Carbamate kinase-like"/>
    <property type="match status" value="1"/>
</dbReference>
<dbReference type="SUPFAM" id="SSF88697">
    <property type="entry name" value="PUA domain-like"/>
    <property type="match status" value="1"/>
</dbReference>
<dbReference type="PROSITE" id="PS00902">
    <property type="entry name" value="GLUTAMATE_5_KINASE"/>
    <property type="match status" value="1"/>
</dbReference>
<dbReference type="PROSITE" id="PS50890">
    <property type="entry name" value="PUA"/>
    <property type="match status" value="1"/>
</dbReference>
<reference key="1">
    <citation type="journal article" date="2002" name="Nucleic Acids Res.">
        <title>Genome sequence of Oceanobacillus iheyensis isolated from the Iheya Ridge and its unexpected adaptive capabilities to extreme environments.</title>
        <authorList>
            <person name="Takami H."/>
            <person name="Takaki Y."/>
            <person name="Uchiyama I."/>
        </authorList>
    </citation>
    <scope>NUCLEOTIDE SEQUENCE [LARGE SCALE GENOMIC DNA]</scope>
    <source>
        <strain>DSM 14371 / CIP 107618 / JCM 11309 / KCTC 3954 / HTE831</strain>
    </source>
</reference>
<feature type="chain" id="PRO_0000109701" description="Glutamate 5-kinase">
    <location>
        <begin position="1"/>
        <end position="372"/>
    </location>
</feature>
<feature type="domain" description="PUA" evidence="1">
    <location>
        <begin position="276"/>
        <end position="360"/>
    </location>
</feature>
<feature type="binding site" evidence="1">
    <location>
        <position position="9"/>
    </location>
    <ligand>
        <name>ATP</name>
        <dbReference type="ChEBI" id="CHEBI:30616"/>
    </ligand>
</feature>
<feature type="binding site" evidence="1">
    <location>
        <position position="49"/>
    </location>
    <ligand>
        <name>substrate</name>
    </ligand>
</feature>
<feature type="binding site" evidence="1">
    <location>
        <position position="136"/>
    </location>
    <ligand>
        <name>substrate</name>
    </ligand>
</feature>
<feature type="binding site" evidence="1">
    <location>
        <position position="148"/>
    </location>
    <ligand>
        <name>substrate</name>
    </ligand>
</feature>
<feature type="binding site" evidence="1">
    <location>
        <begin position="168"/>
        <end position="169"/>
    </location>
    <ligand>
        <name>ATP</name>
        <dbReference type="ChEBI" id="CHEBI:30616"/>
    </ligand>
</feature>
<feature type="binding site" evidence="1">
    <location>
        <begin position="210"/>
        <end position="216"/>
    </location>
    <ligand>
        <name>ATP</name>
        <dbReference type="ChEBI" id="CHEBI:30616"/>
    </ligand>
</feature>
<organism>
    <name type="scientific">Oceanobacillus iheyensis (strain DSM 14371 / CIP 107618 / JCM 11309 / KCTC 3954 / HTE831)</name>
    <dbReference type="NCBI Taxonomy" id="221109"/>
    <lineage>
        <taxon>Bacteria</taxon>
        <taxon>Bacillati</taxon>
        <taxon>Bacillota</taxon>
        <taxon>Bacilli</taxon>
        <taxon>Bacillales</taxon>
        <taxon>Bacillaceae</taxon>
        <taxon>Oceanobacillus</taxon>
    </lineage>
</organism>
<proteinExistence type="inferred from homology"/>
<gene>
    <name evidence="1" type="primary">proB</name>
    <name type="ordered locus">OB1052</name>
</gene>